<evidence type="ECO:0000255" key="1">
    <source>
        <dbReference type="HAMAP-Rule" id="MF_00502"/>
    </source>
</evidence>
<evidence type="ECO:0000305" key="2"/>
<name>RL31B_BURCJ</name>
<protein>
    <recommendedName>
        <fullName evidence="1">Large ribosomal subunit protein bL31B</fullName>
    </recommendedName>
    <alternativeName>
        <fullName evidence="2">50S ribosomal protein L31 type B</fullName>
    </alternativeName>
</protein>
<reference key="1">
    <citation type="journal article" date="2009" name="J. Bacteriol.">
        <title>The genome of Burkholderia cenocepacia J2315, an epidemic pathogen of cystic fibrosis patients.</title>
        <authorList>
            <person name="Holden M.T."/>
            <person name="Seth-Smith H.M."/>
            <person name="Crossman L.C."/>
            <person name="Sebaihia M."/>
            <person name="Bentley S.D."/>
            <person name="Cerdeno-Tarraga A.M."/>
            <person name="Thomson N.R."/>
            <person name="Bason N."/>
            <person name="Quail M.A."/>
            <person name="Sharp S."/>
            <person name="Cherevach I."/>
            <person name="Churcher C."/>
            <person name="Goodhead I."/>
            <person name="Hauser H."/>
            <person name="Holroyd N."/>
            <person name="Mungall K."/>
            <person name="Scott P."/>
            <person name="Walker D."/>
            <person name="White B."/>
            <person name="Rose H."/>
            <person name="Iversen P."/>
            <person name="Mil-Homens D."/>
            <person name="Rocha E.P."/>
            <person name="Fialho A.M."/>
            <person name="Baldwin A."/>
            <person name="Dowson C."/>
            <person name="Barrell B.G."/>
            <person name="Govan J.R."/>
            <person name="Vandamme P."/>
            <person name="Hart C.A."/>
            <person name="Mahenthiralingam E."/>
            <person name="Parkhill J."/>
        </authorList>
    </citation>
    <scope>NUCLEOTIDE SEQUENCE [LARGE SCALE GENOMIC DNA]</scope>
    <source>
        <strain>ATCC BAA-245 / DSM 16553 / LMG 16656 / NCTC 13227 / J2315 / CF5610</strain>
    </source>
</reference>
<feature type="chain" id="PRO_1000126790" description="Large ribosomal subunit protein bL31B">
    <location>
        <begin position="1"/>
        <end position="86"/>
    </location>
</feature>
<accession>B4EAZ1</accession>
<comment type="subunit">
    <text evidence="1">Part of the 50S ribosomal subunit.</text>
</comment>
<comment type="similarity">
    <text evidence="1">Belongs to the bacterial ribosomal protein bL31 family. Type B subfamily.</text>
</comment>
<dbReference type="EMBL" id="AM747720">
    <property type="protein sequence ID" value="CAR52206.1"/>
    <property type="molecule type" value="Genomic_DNA"/>
</dbReference>
<dbReference type="RefSeq" id="WP_006485080.1">
    <property type="nucleotide sequence ID" value="NC_011000.1"/>
</dbReference>
<dbReference type="SMR" id="B4EAZ1"/>
<dbReference type="KEGG" id="bcj:BCAL1905"/>
<dbReference type="eggNOG" id="COG0254">
    <property type="taxonomic scope" value="Bacteria"/>
</dbReference>
<dbReference type="HOGENOM" id="CLU_114306_2_2_4"/>
<dbReference type="BioCyc" id="BCEN216591:G1G1V-2098-MONOMER"/>
<dbReference type="Proteomes" id="UP000001035">
    <property type="component" value="Chromosome 1"/>
</dbReference>
<dbReference type="GO" id="GO:1990904">
    <property type="term" value="C:ribonucleoprotein complex"/>
    <property type="evidence" value="ECO:0007669"/>
    <property type="project" value="UniProtKB-KW"/>
</dbReference>
<dbReference type="GO" id="GO:0005840">
    <property type="term" value="C:ribosome"/>
    <property type="evidence" value="ECO:0007669"/>
    <property type="project" value="UniProtKB-KW"/>
</dbReference>
<dbReference type="GO" id="GO:0003735">
    <property type="term" value="F:structural constituent of ribosome"/>
    <property type="evidence" value="ECO:0007669"/>
    <property type="project" value="InterPro"/>
</dbReference>
<dbReference type="GO" id="GO:0006412">
    <property type="term" value="P:translation"/>
    <property type="evidence" value="ECO:0007669"/>
    <property type="project" value="UniProtKB-UniRule"/>
</dbReference>
<dbReference type="Gene3D" id="4.10.830.30">
    <property type="entry name" value="Ribosomal protein L31"/>
    <property type="match status" value="1"/>
</dbReference>
<dbReference type="HAMAP" id="MF_00502">
    <property type="entry name" value="Ribosomal_bL31_2"/>
    <property type="match status" value="1"/>
</dbReference>
<dbReference type="InterPro" id="IPR034704">
    <property type="entry name" value="Ribosomal_bL28/bL31-like_sf"/>
</dbReference>
<dbReference type="InterPro" id="IPR002150">
    <property type="entry name" value="Ribosomal_bL31"/>
</dbReference>
<dbReference type="InterPro" id="IPR027493">
    <property type="entry name" value="Ribosomal_bL31_B"/>
</dbReference>
<dbReference type="InterPro" id="IPR042105">
    <property type="entry name" value="Ribosomal_bL31_sf"/>
</dbReference>
<dbReference type="NCBIfam" id="TIGR00105">
    <property type="entry name" value="L31"/>
    <property type="match status" value="1"/>
</dbReference>
<dbReference type="NCBIfam" id="NF002462">
    <property type="entry name" value="PRK01678.1"/>
    <property type="match status" value="1"/>
</dbReference>
<dbReference type="PANTHER" id="PTHR33280">
    <property type="entry name" value="50S RIBOSOMAL PROTEIN L31, CHLOROPLASTIC"/>
    <property type="match status" value="1"/>
</dbReference>
<dbReference type="PANTHER" id="PTHR33280:SF1">
    <property type="entry name" value="LARGE RIBOSOMAL SUBUNIT PROTEIN BL31C"/>
    <property type="match status" value="1"/>
</dbReference>
<dbReference type="Pfam" id="PF01197">
    <property type="entry name" value="Ribosomal_L31"/>
    <property type="match status" value="1"/>
</dbReference>
<dbReference type="PRINTS" id="PR01249">
    <property type="entry name" value="RIBOSOMALL31"/>
</dbReference>
<dbReference type="SUPFAM" id="SSF143800">
    <property type="entry name" value="L28p-like"/>
    <property type="match status" value="1"/>
</dbReference>
<sequence>MKPGIHPDYREVVFQDMSNGFKFITRSTIQTRENIELDGKTYPLAKIEVSSESHSFYTGQQKIMDTAGRVEKFKNKFGVRANGKAK</sequence>
<proteinExistence type="inferred from homology"/>
<gene>
    <name evidence="1" type="primary">rpmE2</name>
    <name type="ordered locus">BceJ2315_18690</name>
    <name type="ORF">BCAL1905</name>
</gene>
<organism>
    <name type="scientific">Burkholderia cenocepacia (strain ATCC BAA-245 / DSM 16553 / LMG 16656 / NCTC 13227 / J2315 / CF5610)</name>
    <name type="common">Burkholderia cepacia (strain J2315)</name>
    <dbReference type="NCBI Taxonomy" id="216591"/>
    <lineage>
        <taxon>Bacteria</taxon>
        <taxon>Pseudomonadati</taxon>
        <taxon>Pseudomonadota</taxon>
        <taxon>Betaproteobacteria</taxon>
        <taxon>Burkholderiales</taxon>
        <taxon>Burkholderiaceae</taxon>
        <taxon>Burkholderia</taxon>
        <taxon>Burkholderia cepacia complex</taxon>
    </lineage>
</organism>
<keyword id="KW-0687">Ribonucleoprotein</keyword>
<keyword id="KW-0689">Ribosomal protein</keyword>